<accession>O86029</accession>
<dbReference type="EMBL" id="AL591985">
    <property type="protein sequence ID" value="CAC49850.2"/>
    <property type="molecule type" value="Genomic_DNA"/>
</dbReference>
<dbReference type="EMBL" id="AH007335">
    <property type="protein sequence ID" value="AAD13666.1"/>
    <property type="molecule type" value="Genomic_DNA"/>
</dbReference>
<dbReference type="PIR" id="B96023">
    <property type="entry name" value="B96023"/>
</dbReference>
<dbReference type="RefSeq" id="NP_437990.2">
    <property type="nucleotide sequence ID" value="NC_003078.1"/>
</dbReference>
<dbReference type="SMR" id="O86029"/>
<dbReference type="EnsemblBacteria" id="CAC49850">
    <property type="protein sequence ID" value="CAC49850"/>
    <property type="gene ID" value="SM_b20758"/>
</dbReference>
<dbReference type="KEGG" id="sme:SM_b20758"/>
<dbReference type="PATRIC" id="fig|266834.11.peg.6376"/>
<dbReference type="eggNOG" id="COG2188">
    <property type="taxonomic scope" value="Bacteria"/>
</dbReference>
<dbReference type="HOGENOM" id="CLU_063236_2_2_5"/>
<dbReference type="OrthoDB" id="9800645at2"/>
<dbReference type="Proteomes" id="UP000001976">
    <property type="component" value="Plasmid pSymB"/>
</dbReference>
<dbReference type="GO" id="GO:0003677">
    <property type="term" value="F:DNA binding"/>
    <property type="evidence" value="ECO:0007669"/>
    <property type="project" value="UniProtKB-KW"/>
</dbReference>
<dbReference type="GO" id="GO:0003700">
    <property type="term" value="F:DNA-binding transcription factor activity"/>
    <property type="evidence" value="ECO:0007669"/>
    <property type="project" value="InterPro"/>
</dbReference>
<dbReference type="GO" id="GO:0045892">
    <property type="term" value="P:negative regulation of DNA-templated transcription"/>
    <property type="evidence" value="ECO:0007669"/>
    <property type="project" value="TreeGrafter"/>
</dbReference>
<dbReference type="CDD" id="cd07377">
    <property type="entry name" value="WHTH_GntR"/>
    <property type="match status" value="1"/>
</dbReference>
<dbReference type="Gene3D" id="3.40.1410.10">
    <property type="entry name" value="Chorismate lyase-like"/>
    <property type="match status" value="1"/>
</dbReference>
<dbReference type="Gene3D" id="1.10.10.10">
    <property type="entry name" value="Winged helix-like DNA-binding domain superfamily/Winged helix DNA-binding domain"/>
    <property type="match status" value="1"/>
</dbReference>
<dbReference type="InterPro" id="IPR050679">
    <property type="entry name" value="Bact_HTH_transcr_reg"/>
</dbReference>
<dbReference type="InterPro" id="IPR028978">
    <property type="entry name" value="Chorismate_lyase_/UTRA_dom_sf"/>
</dbReference>
<dbReference type="InterPro" id="IPR012702">
    <property type="entry name" value="CP_lyase_PhnF"/>
</dbReference>
<dbReference type="InterPro" id="IPR000524">
    <property type="entry name" value="Tscrpt_reg_HTH_GntR"/>
</dbReference>
<dbReference type="InterPro" id="IPR011663">
    <property type="entry name" value="UTRA"/>
</dbReference>
<dbReference type="InterPro" id="IPR036388">
    <property type="entry name" value="WH-like_DNA-bd_sf"/>
</dbReference>
<dbReference type="InterPro" id="IPR036390">
    <property type="entry name" value="WH_DNA-bd_sf"/>
</dbReference>
<dbReference type="NCBIfam" id="TIGR02325">
    <property type="entry name" value="C_P_lyase_phnF"/>
    <property type="match status" value="1"/>
</dbReference>
<dbReference type="PANTHER" id="PTHR44846">
    <property type="entry name" value="MANNOSYL-D-GLYCERATE TRANSPORT/METABOLISM SYSTEM REPRESSOR MNGR-RELATED"/>
    <property type="match status" value="1"/>
</dbReference>
<dbReference type="PANTHER" id="PTHR44846:SF1">
    <property type="entry name" value="MANNOSYL-D-GLYCERATE TRANSPORT_METABOLISM SYSTEM REPRESSOR MNGR-RELATED"/>
    <property type="match status" value="1"/>
</dbReference>
<dbReference type="Pfam" id="PF00392">
    <property type="entry name" value="GntR"/>
    <property type="match status" value="1"/>
</dbReference>
<dbReference type="Pfam" id="PF07702">
    <property type="entry name" value="UTRA"/>
    <property type="match status" value="1"/>
</dbReference>
<dbReference type="PRINTS" id="PR00035">
    <property type="entry name" value="HTHGNTR"/>
</dbReference>
<dbReference type="SMART" id="SM00345">
    <property type="entry name" value="HTH_GNTR"/>
    <property type="match status" value="1"/>
</dbReference>
<dbReference type="SMART" id="SM00866">
    <property type="entry name" value="UTRA"/>
    <property type="match status" value="1"/>
</dbReference>
<dbReference type="SUPFAM" id="SSF64288">
    <property type="entry name" value="Chorismate lyase-like"/>
    <property type="match status" value="1"/>
</dbReference>
<dbReference type="SUPFAM" id="SSF46785">
    <property type="entry name" value="Winged helix' DNA-binding domain"/>
    <property type="match status" value="1"/>
</dbReference>
<dbReference type="PROSITE" id="PS50949">
    <property type="entry name" value="HTH_GNTR"/>
    <property type="match status" value="1"/>
</dbReference>
<name>Y6150_RHIME</name>
<proteinExistence type="predicted"/>
<evidence type="ECO:0000255" key="1">
    <source>
        <dbReference type="PROSITE-ProRule" id="PRU00307"/>
    </source>
</evidence>
<protein>
    <recommendedName>
        <fullName>Uncharacterized HTH-type transcriptional regulator RB1450</fullName>
    </recommendedName>
</protein>
<reference key="1">
    <citation type="journal article" date="2001" name="Proc. Natl. Acad. Sci. U.S.A.">
        <title>The complete sequence of the 1,683-kb pSymB megaplasmid from the N2-fixing endosymbiont Sinorhizobium meliloti.</title>
        <authorList>
            <person name="Finan T.M."/>
            <person name="Weidner S."/>
            <person name="Wong K."/>
            <person name="Buhrmester J."/>
            <person name="Chain P."/>
            <person name="Vorhoelter F.J."/>
            <person name="Hernandez-Lucas I."/>
            <person name="Becker A."/>
            <person name="Cowie A."/>
            <person name="Gouzy J."/>
            <person name="Golding B."/>
            <person name="Puehler A."/>
        </authorList>
    </citation>
    <scope>NUCLEOTIDE SEQUENCE [LARGE SCALE GENOMIC DNA]</scope>
    <source>
        <strain>1021</strain>
    </source>
</reference>
<reference key="2">
    <citation type="journal article" date="2001" name="Science">
        <title>The composite genome of the legume symbiont Sinorhizobium meliloti.</title>
        <authorList>
            <person name="Galibert F."/>
            <person name="Finan T.M."/>
            <person name="Long S.R."/>
            <person name="Puehler A."/>
            <person name="Abola P."/>
            <person name="Ampe F."/>
            <person name="Barloy-Hubler F."/>
            <person name="Barnett M.J."/>
            <person name="Becker A."/>
            <person name="Boistard P."/>
            <person name="Bothe G."/>
            <person name="Boutry M."/>
            <person name="Bowser L."/>
            <person name="Buhrmester J."/>
            <person name="Cadieu E."/>
            <person name="Capela D."/>
            <person name="Chain P."/>
            <person name="Cowie A."/>
            <person name="Davis R.W."/>
            <person name="Dreano S."/>
            <person name="Federspiel N.A."/>
            <person name="Fisher R.F."/>
            <person name="Gloux S."/>
            <person name="Godrie T."/>
            <person name="Goffeau A."/>
            <person name="Golding B."/>
            <person name="Gouzy J."/>
            <person name="Gurjal M."/>
            <person name="Hernandez-Lucas I."/>
            <person name="Hong A."/>
            <person name="Huizar L."/>
            <person name="Hyman R.W."/>
            <person name="Jones T."/>
            <person name="Kahn D."/>
            <person name="Kahn M.L."/>
            <person name="Kalman S."/>
            <person name="Keating D.H."/>
            <person name="Kiss E."/>
            <person name="Komp C."/>
            <person name="Lelaure V."/>
            <person name="Masuy D."/>
            <person name="Palm C."/>
            <person name="Peck M.C."/>
            <person name="Pohl T.M."/>
            <person name="Portetelle D."/>
            <person name="Purnelle B."/>
            <person name="Ramsperger U."/>
            <person name="Surzycki R."/>
            <person name="Thebault P."/>
            <person name="Vandenbol M."/>
            <person name="Vorhoelter F.J."/>
            <person name="Weidner S."/>
            <person name="Wells D.H."/>
            <person name="Wong K."/>
            <person name="Yeh K.-C."/>
            <person name="Batut J."/>
        </authorList>
    </citation>
    <scope>NUCLEOTIDE SEQUENCE [LARGE SCALE GENOMIC DNA]</scope>
    <source>
        <strain>1021</strain>
    </source>
</reference>
<reference key="3">
    <citation type="journal article" date="1999" name="Gene">
        <title>Methylmalonyl-CoA mutase encoding gene of Sinorhizobium meliloti.</title>
        <authorList>
            <person name="Charles T.C."/>
            <person name="Aneja P."/>
        </authorList>
    </citation>
    <scope>NUCLEOTIDE SEQUENCE [GENOMIC DNA] OF 51-244</scope>
    <source>
        <strain>SU47 / 1021</strain>
    </source>
</reference>
<sequence>MVAKVVERQMGVALWRQIADRIRLAISNGDYDATGMVPPETALAAEFGVNRHTVRSALAALAEEGLVRAVQGRGTMIERKDRVSYPISRRTRFSQGLGRQVREIGTELLGHAQVPASGEIATALGVPPGTPLIELSTVSSGDGRPLSTAVSYYPAERFARMAEEYAQLGSVTKAFAAHGLDDYVRVSTEIVARHAEAEELSLLKLSPGAIVMETQSVNADLEGRPVEYSRTRFAADRVKLRIET</sequence>
<feature type="chain" id="PRO_0000050702" description="Uncharacterized HTH-type transcriptional regulator RB1450">
    <location>
        <begin position="1"/>
        <end position="244"/>
    </location>
</feature>
<feature type="domain" description="HTH gntR-type" evidence="1">
    <location>
        <begin position="12"/>
        <end position="80"/>
    </location>
</feature>
<feature type="DNA-binding region" description="H-T-H motif" evidence="1">
    <location>
        <begin position="40"/>
        <end position="59"/>
    </location>
</feature>
<gene>
    <name type="ordered locus">RB1450</name>
    <name type="ORF">SMb20758</name>
</gene>
<keyword id="KW-0238">DNA-binding</keyword>
<keyword id="KW-0614">Plasmid</keyword>
<keyword id="KW-1185">Reference proteome</keyword>
<keyword id="KW-0804">Transcription</keyword>
<keyword id="KW-0805">Transcription regulation</keyword>
<organism>
    <name type="scientific">Rhizobium meliloti (strain 1021)</name>
    <name type="common">Ensifer meliloti</name>
    <name type="synonym">Sinorhizobium meliloti</name>
    <dbReference type="NCBI Taxonomy" id="266834"/>
    <lineage>
        <taxon>Bacteria</taxon>
        <taxon>Pseudomonadati</taxon>
        <taxon>Pseudomonadota</taxon>
        <taxon>Alphaproteobacteria</taxon>
        <taxon>Hyphomicrobiales</taxon>
        <taxon>Rhizobiaceae</taxon>
        <taxon>Sinorhizobium/Ensifer group</taxon>
        <taxon>Sinorhizobium</taxon>
    </lineage>
</organism>
<geneLocation type="plasmid">
    <name>pSymB</name>
    <name>megaplasmid 2</name>
</geneLocation>